<name>NADD_CLOPE</name>
<feature type="chain" id="PRO_0000181403" description="Probable nicotinate-nucleotide adenylyltransferase">
    <location>
        <begin position="1"/>
        <end position="202"/>
    </location>
</feature>
<dbReference type="EC" id="2.7.7.18" evidence="1"/>
<dbReference type="EMBL" id="BA000016">
    <property type="protein sequence ID" value="BAB81831.1"/>
    <property type="molecule type" value="Genomic_DNA"/>
</dbReference>
<dbReference type="RefSeq" id="WP_011010781.1">
    <property type="nucleotide sequence ID" value="NC_003366.1"/>
</dbReference>
<dbReference type="SMR" id="Q8XIJ4"/>
<dbReference type="STRING" id="195102.gene:10491395"/>
<dbReference type="KEGG" id="cpe:CPE2125"/>
<dbReference type="HOGENOM" id="CLU_069765_0_1_9"/>
<dbReference type="UniPathway" id="UPA00253">
    <property type="reaction ID" value="UER00332"/>
</dbReference>
<dbReference type="Proteomes" id="UP000000818">
    <property type="component" value="Chromosome"/>
</dbReference>
<dbReference type="GO" id="GO:0005524">
    <property type="term" value="F:ATP binding"/>
    <property type="evidence" value="ECO:0007669"/>
    <property type="project" value="UniProtKB-KW"/>
</dbReference>
<dbReference type="GO" id="GO:0004515">
    <property type="term" value="F:nicotinate-nucleotide adenylyltransferase activity"/>
    <property type="evidence" value="ECO:0007669"/>
    <property type="project" value="UniProtKB-UniRule"/>
</dbReference>
<dbReference type="GO" id="GO:0009435">
    <property type="term" value="P:NAD biosynthetic process"/>
    <property type="evidence" value="ECO:0007669"/>
    <property type="project" value="UniProtKB-UniRule"/>
</dbReference>
<dbReference type="CDD" id="cd02165">
    <property type="entry name" value="NMNAT"/>
    <property type="match status" value="1"/>
</dbReference>
<dbReference type="Gene3D" id="3.40.50.620">
    <property type="entry name" value="HUPs"/>
    <property type="match status" value="1"/>
</dbReference>
<dbReference type="HAMAP" id="MF_00244">
    <property type="entry name" value="NaMN_adenylyltr"/>
    <property type="match status" value="1"/>
</dbReference>
<dbReference type="InterPro" id="IPR004821">
    <property type="entry name" value="Cyt_trans-like"/>
</dbReference>
<dbReference type="InterPro" id="IPR005248">
    <property type="entry name" value="NadD/NMNAT"/>
</dbReference>
<dbReference type="InterPro" id="IPR014729">
    <property type="entry name" value="Rossmann-like_a/b/a_fold"/>
</dbReference>
<dbReference type="NCBIfam" id="TIGR00125">
    <property type="entry name" value="cyt_tran_rel"/>
    <property type="match status" value="1"/>
</dbReference>
<dbReference type="NCBIfam" id="TIGR00482">
    <property type="entry name" value="nicotinate (nicotinamide) nucleotide adenylyltransferase"/>
    <property type="match status" value="1"/>
</dbReference>
<dbReference type="NCBIfam" id="NF000840">
    <property type="entry name" value="PRK00071.1-3"/>
    <property type="match status" value="1"/>
</dbReference>
<dbReference type="PANTHER" id="PTHR39321">
    <property type="entry name" value="NICOTINATE-NUCLEOTIDE ADENYLYLTRANSFERASE-RELATED"/>
    <property type="match status" value="1"/>
</dbReference>
<dbReference type="PANTHER" id="PTHR39321:SF3">
    <property type="entry name" value="PHOSPHOPANTETHEINE ADENYLYLTRANSFERASE"/>
    <property type="match status" value="1"/>
</dbReference>
<dbReference type="Pfam" id="PF01467">
    <property type="entry name" value="CTP_transf_like"/>
    <property type="match status" value="1"/>
</dbReference>
<dbReference type="SUPFAM" id="SSF52374">
    <property type="entry name" value="Nucleotidylyl transferase"/>
    <property type="match status" value="1"/>
</dbReference>
<gene>
    <name evidence="1" type="primary">nadD</name>
    <name type="ordered locus">CPE2125</name>
</gene>
<sequence>MKKIGVFGGTFDPIHIGHIYIAYEAYKILELDEVIFMPAGNPPHKKWKDITDEIIRYEMVKKAIEPYSFFSINNYEIEKKGLSFTYETLRYLHESFKEVELYFITGADCLVNLNSWKNINEIFKFSNLVVFNRPGFDKNDLLKRKEEFDREYCTNIVYLDLLNIEISSTLIRERVRESLEVKFFLPPGVVDIIDKYNLYRRE</sequence>
<protein>
    <recommendedName>
        <fullName evidence="1">Probable nicotinate-nucleotide adenylyltransferase</fullName>
        <ecNumber evidence="1">2.7.7.18</ecNumber>
    </recommendedName>
    <alternativeName>
        <fullName evidence="1">Deamido-NAD(+) diphosphorylase</fullName>
    </alternativeName>
    <alternativeName>
        <fullName evidence="1">Deamido-NAD(+) pyrophosphorylase</fullName>
    </alternativeName>
    <alternativeName>
        <fullName evidence="1">Nicotinate mononucleotide adenylyltransferase</fullName>
        <shortName evidence="1">NaMN adenylyltransferase</shortName>
    </alternativeName>
</protein>
<reference key="1">
    <citation type="journal article" date="2002" name="Proc. Natl. Acad. Sci. U.S.A.">
        <title>Complete genome sequence of Clostridium perfringens, an anaerobic flesh-eater.</title>
        <authorList>
            <person name="Shimizu T."/>
            <person name="Ohtani K."/>
            <person name="Hirakawa H."/>
            <person name="Ohshima K."/>
            <person name="Yamashita A."/>
            <person name="Shiba T."/>
            <person name="Ogasawara N."/>
            <person name="Hattori M."/>
            <person name="Kuhara S."/>
            <person name="Hayashi H."/>
        </authorList>
    </citation>
    <scope>NUCLEOTIDE SEQUENCE [LARGE SCALE GENOMIC DNA]</scope>
    <source>
        <strain>13 / Type A</strain>
    </source>
</reference>
<comment type="function">
    <text evidence="1">Catalyzes the reversible adenylation of nicotinate mononucleotide (NaMN) to nicotinic acid adenine dinucleotide (NaAD).</text>
</comment>
<comment type="catalytic activity">
    <reaction evidence="1">
        <text>nicotinate beta-D-ribonucleotide + ATP + H(+) = deamido-NAD(+) + diphosphate</text>
        <dbReference type="Rhea" id="RHEA:22860"/>
        <dbReference type="ChEBI" id="CHEBI:15378"/>
        <dbReference type="ChEBI" id="CHEBI:30616"/>
        <dbReference type="ChEBI" id="CHEBI:33019"/>
        <dbReference type="ChEBI" id="CHEBI:57502"/>
        <dbReference type="ChEBI" id="CHEBI:58437"/>
        <dbReference type="EC" id="2.7.7.18"/>
    </reaction>
</comment>
<comment type="pathway">
    <text evidence="1">Cofactor biosynthesis; NAD(+) biosynthesis; deamido-NAD(+) from nicotinate D-ribonucleotide: step 1/1.</text>
</comment>
<comment type="similarity">
    <text evidence="1">Belongs to the NadD family.</text>
</comment>
<evidence type="ECO:0000255" key="1">
    <source>
        <dbReference type="HAMAP-Rule" id="MF_00244"/>
    </source>
</evidence>
<keyword id="KW-0067">ATP-binding</keyword>
<keyword id="KW-0520">NAD</keyword>
<keyword id="KW-0547">Nucleotide-binding</keyword>
<keyword id="KW-0548">Nucleotidyltransferase</keyword>
<keyword id="KW-0662">Pyridine nucleotide biosynthesis</keyword>
<keyword id="KW-1185">Reference proteome</keyword>
<keyword id="KW-0808">Transferase</keyword>
<accession>Q8XIJ4</accession>
<proteinExistence type="inferred from homology"/>
<organism>
    <name type="scientific">Clostridium perfringens (strain 13 / Type A)</name>
    <dbReference type="NCBI Taxonomy" id="195102"/>
    <lineage>
        <taxon>Bacteria</taxon>
        <taxon>Bacillati</taxon>
        <taxon>Bacillota</taxon>
        <taxon>Clostridia</taxon>
        <taxon>Eubacteriales</taxon>
        <taxon>Clostridiaceae</taxon>
        <taxon>Clostridium</taxon>
    </lineage>
</organism>